<gene>
    <name evidence="1" type="primary">scpB</name>
</gene>
<reference key="1">
    <citation type="journal article" date="2002" name="J. Mol. Microbiol. Biotechnol.">
        <title>A XerD recombinase with unusual active site motifs in Streptococcus pneumoniae.</title>
        <authorList>
            <person name="Reichmann P."/>
            <person name="Hakenbeck R."/>
        </authorList>
    </citation>
    <scope>NUCLEOTIDE SEQUENCE [GENOMIC DNA]</scope>
    <source>
        <strain>476</strain>
    </source>
</reference>
<evidence type="ECO:0000255" key="1">
    <source>
        <dbReference type="HAMAP-Rule" id="MF_01804"/>
    </source>
</evidence>
<comment type="function">
    <text evidence="1">Participates in chromosomal partition during cell division. May act via the formation of a condensin-like complex containing Smc and ScpA that pull DNA away from mid-cell into both cell halves.</text>
</comment>
<comment type="subunit">
    <text evidence="1">Homodimer. Homodimerization may be required to stabilize the binding of ScpA to the Smc head domains. Component of a cohesin-like complex composed of ScpA, ScpB and the Smc homodimer, in which ScpA and ScpB bind to the head domain of Smc. The presence of the three proteins is required for the association of the complex with DNA.</text>
</comment>
<comment type="subcellular location">
    <subcellularLocation>
        <location evidence="1">Cytoplasm</location>
    </subcellularLocation>
    <text evidence="1">Associated with two foci at the outer edges of the nucleoid region in young cells, and at four foci within both cell halves in older cells.</text>
</comment>
<comment type="similarity">
    <text evidence="1">Belongs to the ScpB family.</text>
</comment>
<name>SCPB_STRMT</name>
<accession>Q9EUR1</accession>
<dbReference type="EMBL" id="AJ277490">
    <property type="protein sequence ID" value="CAC19445.1"/>
    <property type="molecule type" value="Genomic_DNA"/>
</dbReference>
<dbReference type="SMR" id="Q9EUR1"/>
<dbReference type="GO" id="GO:0005737">
    <property type="term" value="C:cytoplasm"/>
    <property type="evidence" value="ECO:0007669"/>
    <property type="project" value="UniProtKB-SubCell"/>
</dbReference>
<dbReference type="GO" id="GO:0051301">
    <property type="term" value="P:cell division"/>
    <property type="evidence" value="ECO:0007669"/>
    <property type="project" value="UniProtKB-KW"/>
</dbReference>
<dbReference type="GO" id="GO:0051304">
    <property type="term" value="P:chromosome separation"/>
    <property type="evidence" value="ECO:0007669"/>
    <property type="project" value="InterPro"/>
</dbReference>
<dbReference type="GO" id="GO:0006260">
    <property type="term" value="P:DNA replication"/>
    <property type="evidence" value="ECO:0007669"/>
    <property type="project" value="UniProtKB-UniRule"/>
</dbReference>
<dbReference type="Gene3D" id="1.10.10.10">
    <property type="entry name" value="Winged helix-like DNA-binding domain superfamily/Winged helix DNA-binding domain"/>
    <property type="match status" value="2"/>
</dbReference>
<dbReference type="HAMAP" id="MF_01804">
    <property type="entry name" value="ScpB"/>
    <property type="match status" value="1"/>
</dbReference>
<dbReference type="InterPro" id="IPR005234">
    <property type="entry name" value="ScpB_csome_segregation"/>
</dbReference>
<dbReference type="InterPro" id="IPR036388">
    <property type="entry name" value="WH-like_DNA-bd_sf"/>
</dbReference>
<dbReference type="InterPro" id="IPR036390">
    <property type="entry name" value="WH_DNA-bd_sf"/>
</dbReference>
<dbReference type="NCBIfam" id="TIGR00281">
    <property type="entry name" value="SMC-Scp complex subunit ScpB"/>
    <property type="match status" value="1"/>
</dbReference>
<dbReference type="PANTHER" id="PTHR34298">
    <property type="entry name" value="SEGREGATION AND CONDENSATION PROTEIN B"/>
    <property type="match status" value="1"/>
</dbReference>
<dbReference type="PANTHER" id="PTHR34298:SF2">
    <property type="entry name" value="SEGREGATION AND CONDENSATION PROTEIN B"/>
    <property type="match status" value="1"/>
</dbReference>
<dbReference type="Pfam" id="PF04079">
    <property type="entry name" value="SMC_ScpB"/>
    <property type="match status" value="1"/>
</dbReference>
<dbReference type="PIRSF" id="PIRSF019345">
    <property type="entry name" value="ScpB"/>
    <property type="match status" value="1"/>
</dbReference>
<dbReference type="SUPFAM" id="SSF46785">
    <property type="entry name" value="Winged helix' DNA-binding domain"/>
    <property type="match status" value="2"/>
</dbReference>
<sequence length="189" mass="21440">MSTLAKIEALLFVRGEDWIRVRQLAELLSLPPTGIQQSLEKLSQKYEKDLDSSLDLIETGGAYRLVTKPQFSEILKEYSKAPINQSLSRPALETLSIIAYKQPITRIEIDAIRGVNSSGALAKLQAFDLIREDGKKEVLGRPNLYVTTDYFLDYMGINHLEELPVIDELEIQAQESQLFGERIEEDENQ</sequence>
<keyword id="KW-0131">Cell cycle</keyword>
<keyword id="KW-0132">Cell division</keyword>
<keyword id="KW-0159">Chromosome partition</keyword>
<keyword id="KW-0963">Cytoplasm</keyword>
<organism>
    <name type="scientific">Streptococcus mitis</name>
    <dbReference type="NCBI Taxonomy" id="28037"/>
    <lineage>
        <taxon>Bacteria</taxon>
        <taxon>Bacillati</taxon>
        <taxon>Bacillota</taxon>
        <taxon>Bacilli</taxon>
        <taxon>Lactobacillales</taxon>
        <taxon>Streptococcaceae</taxon>
        <taxon>Streptococcus</taxon>
        <taxon>Streptococcus mitis group</taxon>
    </lineage>
</organism>
<protein>
    <recommendedName>
        <fullName evidence="1">Segregation and condensation protein B</fullName>
    </recommendedName>
</protein>
<proteinExistence type="inferred from homology"/>
<feature type="chain" id="PRO_0000211157" description="Segregation and condensation protein B">
    <location>
        <begin position="1"/>
        <end position="189"/>
    </location>
</feature>